<accession>P10912</accession>
<accession>Q9HCX2</accession>
<comment type="function">
    <text evidence="12 13 20 30">Receptor for pituitary gland growth hormone (GH1) involved in regulating postnatal body growth (PubMed:1549776, PubMed:2825030, PubMed:8943276). On ligand binding, couples to the JAK2/STAT5 pathway (PubMed:1549776, PubMed:15690087, PubMed:2825030, PubMed:8943276).</text>
</comment>
<comment type="function">
    <molecule>Growth hormone-binding protein</molecule>
    <text evidence="20">The soluble form (GHBP) acts as a reservoir of growth hormone in plasma and may be a modulator/inhibitor of GH signaling.</text>
</comment>
<comment type="function">
    <molecule>Isoform 2</molecule>
    <text evidence="29 32">Up-regulates the production of the soluble Growth hormone-binding protein form (GHBP) and acts as a negative inhibitor of growth hormone signaling.</text>
</comment>
<comment type="subunit">
    <text evidence="30">On growth hormone (GH) binding, forms homodimers and binds JAK2 via a box 1-containing domain.</text>
</comment>
<comment type="interaction">
    <interactant intactId="EBI-286316">
        <id>P10912</id>
    </interactant>
    <interactant intactId="EBI-1265847">
        <id>Q16829</id>
        <label>DUSP7</label>
    </interactant>
    <organismsDiffer>false</organismsDiffer>
    <experiments>2</experiments>
</comment>
<comment type="interaction">
    <interactant intactId="EBI-286316">
        <id>P10912</id>
    </interactant>
    <interactant intactId="EBI-1026046">
        <id>P01241</id>
        <label>GH1</label>
    </interactant>
    <organismsDiffer>false</organismsDiffer>
    <experiments>4</experiments>
</comment>
<comment type="interaction">
    <interactant intactId="EBI-286316">
        <id>P10912</id>
    </interactant>
    <interactant intactId="EBI-286316">
        <id>P10912</id>
        <label>GHR</label>
    </interactant>
    <organismsDiffer>false</organismsDiffer>
    <experiments>4</experiments>
</comment>
<comment type="interaction">
    <interactant intactId="EBI-286316">
        <id>P10912</id>
    </interactant>
    <interactant intactId="EBI-389883">
        <id>P16333</id>
        <label>NCK1</label>
    </interactant>
    <organismsDiffer>false</organismsDiffer>
    <experiments>3</experiments>
</comment>
<comment type="interaction">
    <interactant intactId="EBI-286316">
        <id>P10912</id>
    </interactant>
    <interactant intactId="EBI-968788">
        <id>P18031</id>
        <label>PTPN1</label>
    </interactant>
    <organismsDiffer>false</organismsDiffer>
    <experiments>5</experiments>
</comment>
<comment type="interaction">
    <interactant intactId="EBI-286316">
        <id>P10912</id>
    </interactant>
    <interactant intactId="EBI-984930">
        <id>P17706</id>
        <label>PTPN2</label>
    </interactant>
    <organismsDiffer>false</organismsDiffer>
    <experiments>8</experiments>
</comment>
<comment type="interaction">
    <interactant intactId="EBI-286316">
        <id>P10912</id>
    </interactant>
    <interactant intactId="EBI-1047946">
        <id>P26045</id>
        <label>PTPN3</label>
    </interactant>
    <organismsDiffer>false</organismsDiffer>
    <experiments>4</experiments>
</comment>
<comment type="interaction">
    <interactant intactId="EBI-286316">
        <id>P10912</id>
    </interactant>
    <interactant intactId="EBI-742898">
        <id>P43378</id>
        <label>PTPN9</label>
    </interactant>
    <organismsDiffer>false</organismsDiffer>
    <experiments>2</experiments>
</comment>
<comment type="interaction">
    <interactant intactId="EBI-286316">
        <id>P10912</id>
    </interactant>
    <interactant intactId="EBI-1265766">
        <id>P23467</id>
        <label>PTPRB</label>
    </interactant>
    <organismsDiffer>false</organismsDiffer>
    <experiments>3</experiments>
</comment>
<comment type="interaction">
    <interactant intactId="EBI-286316">
        <id>P10912</id>
    </interactant>
    <interactant intactId="EBI-1267176">
        <id>Q9HD43</id>
        <label>PTPRH</label>
    </interactant>
    <organismsDiffer>false</organismsDiffer>
    <experiments>4</experiments>
</comment>
<comment type="interaction">
    <interactant intactId="EBI-286316">
        <id>P10912</id>
    </interactant>
    <interactant intactId="EBI-2264500">
        <id>Q12913</id>
        <label>PTPRJ</label>
    </interactant>
    <organismsDiffer>false</organismsDiffer>
    <experiments>2</experiments>
</comment>
<comment type="interaction">
    <interactant intactId="EBI-286316">
        <id>P10912</id>
    </interactant>
    <interactant intactId="EBI-286271">
        <id>Q9JLI4</id>
        <label>Ncoa6</label>
    </interactant>
    <organismsDiffer>true</organismsDiffer>
    <experiments>2</experiments>
</comment>
<comment type="subcellular location">
    <subcellularLocation>
        <location evidence="20">Cell membrane</location>
        <topology evidence="3">Single-pass type I membrane protein</topology>
    </subcellularLocation>
    <text evidence="2">On growth hormone binding, GHR is ubiquitinated, internalized, down-regulated and transported into a degradative or non-degradative pathway.</text>
</comment>
<comment type="subcellular location">
    <molecule>Isoform 2</molecule>
    <subcellularLocation>
        <location evidence="32">Cell membrane</location>
        <topology evidence="3">Single-pass type I membrane protein</topology>
    </subcellularLocation>
    <text evidence="32">Remains fixed to the cell membrane and is not internalized.</text>
</comment>
<comment type="subcellular location">
    <molecule>Growth hormone-binding protein</molecule>
    <subcellularLocation>
        <location evidence="20">Secreted</location>
    </subcellularLocation>
    <text evidence="20">Complexed to a substantial fraction of circulating GH.</text>
</comment>
<comment type="alternative products">
    <event type="alternative splicing"/>
    <isoform>
        <id>P10912-1</id>
        <name>1</name>
        <name>GHRfl</name>
        <sequence type="displayed"/>
    </isoform>
    <isoform>
        <id>P10912-2</id>
        <name>2</name>
        <name>GHRtr</name>
        <name>GHR1-279</name>
        <sequence type="described" ref="VSP_010227 VSP_010228"/>
    </isoform>
    <isoform>
        <id>P10912-3</id>
        <name>3</name>
        <name>GHR1-277</name>
        <sequence type="described" ref="VSP_010229 VSP_010230"/>
    </isoform>
    <isoform>
        <id>P10912-4</id>
        <name>4</name>
        <name>GHRd3</name>
        <sequence type="described" ref="VSP_010225 VSP_010226"/>
    </isoform>
</comment>
<comment type="tissue specificity">
    <text evidence="29">Expressed in various tissues with high expression in liver and skeletal muscle.</text>
</comment>
<comment type="tissue specificity">
    <molecule>Isoform 2</molecule>
    <text evidence="29">Isoform 2 is expressed in lung, stomach and muscle.</text>
</comment>
<comment type="tissue specificity">
    <molecule>Isoform 4</molecule>
    <text evidence="14 25">Predominantly expressed in kidney, bladder, adrenal gland and brain stem (PubMed:1569971). Highly expressed in placental villi (PubMed:1569971, PubMed:8360189).</text>
</comment>
<comment type="domain">
    <text evidence="42">The WSXWS motif appears to be necessary for proper protein folding and thereby efficient intracellular transport and cell-surface receptor binding (PubMed:14678285).</text>
</comment>
<comment type="domain">
    <text evidence="1">The box 1 motif is required for JAK interaction and/or activation.</text>
</comment>
<comment type="domain">
    <text evidence="12 30">The extracellular domain is the ligand-binding domain representing the growth hormone-binding protein (GHBP).</text>
</comment>
<comment type="domain">
    <text evidence="2">The ubiquitination-dependent endocytosis motif (UbE) is required for recruitment of the ubiquitin conjugation system on to the receptor and for its internalization.</text>
</comment>
<comment type="PTM">
    <text evidence="2 9">The soluble form (GHBP) is produced by phorbol ester-promoted proteolytic cleavage at the cell surface (shedding) by ADAM17/TACE (PubMed:11785980). Shedding is inhibited by growth hormone (GH) binding to the receptor probably due to a conformational change in GHR rendering the receptor inaccessible to ADAM17 (By similarity).</text>
</comment>
<comment type="PTM">
    <text evidence="13 15 17">On GH binding, phosphorylated on tyrosine residues in the cytoplasmic domain by JAK2.</text>
</comment>
<comment type="PTM">
    <text evidence="2 15 17 21 22">Ubiquitinated by the ECS(SOCS2) complex following ligand-binding and phosphorylation by JAK2, leading to its degradation by the proteasome (PubMed:21980433, PubMed:25505247, PubMed:31182716, PubMed:34857742). Regulation by the ECS(SOCS2) complex acts as a negative feedback loop of growth hormone receptor signaling (PubMed:21980433). Ubiquitination is not sufficient for GHR internalization (By similarity).</text>
</comment>
<comment type="polymorphism">
    <text evidence="10">Genetic variation in GHR may act as phenotype modifier in familial hypercholesterolemia [MIM:143890] patients carrying a mutation in the LDLR gene.</text>
</comment>
<comment type="disease" evidence="8 11 18 24 27 28 31 33 35">
    <disease id="DI-01877">
        <name>Laron syndrome</name>
        <acronym>LARS</acronym>
        <description>A severe form of growth hormone insensitivity characterized by growth impairment, short stature, dysfunctional growth hormone receptor, and failure to generate insulin-like growth factor I in response to growth hormone.</description>
        <dbReference type="MIM" id="262500"/>
    </disease>
    <text>The disease is caused by variants affecting the gene represented in this entry.</text>
</comment>
<comment type="disease" evidence="23">
    <disease id="DI-02300">
        <name>Growth hormone insensitivity, partial</name>
        <acronym>GHIP</acronym>
        <description>A disease characterized by partial resistance to growth hormone resulting in short stature. Short stature is defined by a standing height more than 2 standard deviations below the mean (or below the 2.5 percentile) for sex and chronological age, compared with a well-nourished, healthy, genetically relevant population.</description>
        <dbReference type="MIM" id="604271"/>
    </disease>
    <text>The disease is caused by variants affecting the gene represented in this entry.</text>
</comment>
<comment type="miscellaneous">
    <molecule>Isoform 4</molecule>
    <text evidence="7">Arises by species-specific retrovirus-mediated alternative splice mimicry.</text>
</comment>
<comment type="similarity">
    <text evidence="41">Belongs to the type I cytokine receptor family. Type 1 subfamily.</text>
</comment>
<evidence type="ECO:0000250" key="1">
    <source>
        <dbReference type="UniProtKB" id="P16310"/>
    </source>
</evidence>
<evidence type="ECO:0000250" key="2">
    <source>
        <dbReference type="UniProtKB" id="P19941"/>
    </source>
</evidence>
<evidence type="ECO:0000255" key="3"/>
<evidence type="ECO:0000255" key="4">
    <source>
        <dbReference type="PROSITE-ProRule" id="PRU00316"/>
    </source>
</evidence>
<evidence type="ECO:0000256" key="5">
    <source>
        <dbReference type="SAM" id="MobiDB-lite"/>
    </source>
</evidence>
<evidence type="ECO:0000269" key="6">
    <source>
    </source>
</evidence>
<evidence type="ECO:0000269" key="7">
    <source>
    </source>
</evidence>
<evidence type="ECO:0000269" key="8">
    <source>
    </source>
</evidence>
<evidence type="ECO:0000269" key="9">
    <source>
    </source>
</evidence>
<evidence type="ECO:0000269" key="10">
    <source>
    </source>
</evidence>
<evidence type="ECO:0000269" key="11">
    <source>
    </source>
</evidence>
<evidence type="ECO:0000269" key="12">
    <source>
    </source>
</evidence>
<evidence type="ECO:0000269" key="13">
    <source>
    </source>
</evidence>
<evidence type="ECO:0000269" key="14">
    <source>
    </source>
</evidence>
<evidence type="ECO:0000269" key="15">
    <source>
    </source>
</evidence>
<evidence type="ECO:0000269" key="16">
    <source>
    </source>
</evidence>
<evidence type="ECO:0000269" key="17">
    <source>
    </source>
</evidence>
<evidence type="ECO:0000269" key="18">
    <source>
    </source>
</evidence>
<evidence type="ECO:0000269" key="19">
    <source>
    </source>
</evidence>
<evidence type="ECO:0000269" key="20">
    <source>
    </source>
</evidence>
<evidence type="ECO:0000269" key="21">
    <source>
    </source>
</evidence>
<evidence type="ECO:0000269" key="22">
    <source>
    </source>
</evidence>
<evidence type="ECO:0000269" key="23">
    <source>
    </source>
</evidence>
<evidence type="ECO:0000269" key="24">
    <source>
    </source>
</evidence>
<evidence type="ECO:0000269" key="25">
    <source>
    </source>
</evidence>
<evidence type="ECO:0000269" key="26">
    <source>
    </source>
</evidence>
<evidence type="ECO:0000269" key="27">
    <source>
    </source>
</evidence>
<evidence type="ECO:0000269" key="28">
    <source>
    </source>
</evidence>
<evidence type="ECO:0000269" key="29">
    <source>
    </source>
</evidence>
<evidence type="ECO:0000269" key="30">
    <source>
    </source>
</evidence>
<evidence type="ECO:0000269" key="31">
    <source>
    </source>
</evidence>
<evidence type="ECO:0000269" key="32">
    <source>
    </source>
</evidence>
<evidence type="ECO:0000269" key="33">
    <source>
    </source>
</evidence>
<evidence type="ECO:0000269" key="34">
    <source>
    </source>
</evidence>
<evidence type="ECO:0000269" key="35">
    <source>
    </source>
</evidence>
<evidence type="ECO:0000303" key="36">
    <source>
    </source>
</evidence>
<evidence type="ECO:0000303" key="37">
    <source>
    </source>
</evidence>
<evidence type="ECO:0000303" key="38">
    <source>
    </source>
</evidence>
<evidence type="ECO:0000303" key="39">
    <source>
    </source>
</evidence>
<evidence type="ECO:0000303" key="40">
    <source>
    </source>
</evidence>
<evidence type="ECO:0000305" key="41"/>
<evidence type="ECO:0000305" key="42">
    <source>
    </source>
</evidence>
<evidence type="ECO:0007744" key="43">
    <source>
        <dbReference type="PDB" id="6I5J"/>
    </source>
</evidence>
<evidence type="ECO:0007744" key="44">
    <source>
        <dbReference type="PDB" id="6I5N"/>
    </source>
</evidence>
<evidence type="ECO:0007744" key="45">
    <source>
    </source>
</evidence>
<evidence type="ECO:0007829" key="46">
    <source>
        <dbReference type="PDB" id="1AXI"/>
    </source>
</evidence>
<evidence type="ECO:0007829" key="47">
    <source>
        <dbReference type="PDB" id="1HWG"/>
    </source>
</evidence>
<evidence type="ECO:0007829" key="48">
    <source>
        <dbReference type="PDB" id="2AEW"/>
    </source>
</evidence>
<evidence type="ECO:0007829" key="49">
    <source>
        <dbReference type="PDB" id="3HHR"/>
    </source>
</evidence>
<evidence type="ECO:0007829" key="50">
    <source>
        <dbReference type="PDB" id="5OEK"/>
    </source>
</evidence>
<evidence type="ECO:0007829" key="51">
    <source>
        <dbReference type="PDB" id="5OHD"/>
    </source>
</evidence>
<sequence length="638" mass="71500">MDLWQLLLTLALAGSSDAFSGSEATAAILSRAPWSLQSVNPGLKTNSSKEPKFTKCRSPERETFSCHWTDEVHHGTKNLGPIQLFYTRRNTQEWTQEWKECPDYVSAGENSCYFNSSFTSIWIPYCIKLTSNGGTVDEKCFSVDEIVQPDPPIALNWTLLNVSLTGIHADIQVRWEAPRNADIQKGWMVLEYELQYKEVNETKWKMMDPILTTSVPVYSLKVDKEYEVRVRSKQRNSGNYGEFSEVLYVTLPQMSQFTCEEDFYFPWLLIIIFGIFGLTVMLFVFLFSKQQRIKMLILPPVPVPKIKGIDPDLLKEGKLEEVNTILAIHDSYKPEFHSDDSWVEFIELDIDEPDEKTEESDTDRLLSSDHEKSHSNLGVKDGDSGRTSCCEPDILETDFNANDIHEGTSEVAQPQRLKGEADLLCLDQKNQNNSPYHDACPATQQPSVIQAEKNKPQPLPTEGAESTHQAAHIQLSNPSSLSNIDFYAQVSDITPAGSVVLSPGQKNKAGMSQCDMHPEMVSLCQENFLMDNAYFCEADAKKCIPVAPHIKVESHIQPSLNQEDIYITTESLTTAAGRPGTGEHVPGSEMPVPDYTSIHIVQSPQGLILNATALPLPDKEFLSSCGYVSTDQLNKIMP</sequence>
<gene>
    <name type="primary">GHR</name>
</gene>
<name>GHR_HUMAN</name>
<reference key="1">
    <citation type="journal article" date="1987" name="Nature">
        <title>Growth hormone receptor and serum binding protein: purification, cloning and expression.</title>
        <authorList>
            <person name="Leung D.W."/>
            <person name="Spencer S.A."/>
            <person name="Cachianes G."/>
            <person name="Hammonds R.G."/>
            <person name="Collins C."/>
            <person name="Henzel W.J."/>
            <person name="Barnard R."/>
            <person name="Waters M.J."/>
            <person name="Wood W.I."/>
        </authorList>
    </citation>
    <scope>NUCLEOTIDE SEQUENCE [MRNA] (ISOFORM 1)</scope>
    <scope>FUNCTION</scope>
    <scope>PARTIAL PROTEIN SEQUENCE</scope>
    <scope>SUBCELLULAR LOCATION</scope>
    <source>
        <tissue>Liver</tissue>
    </source>
</reference>
<reference key="2">
    <citation type="journal article" date="1989" name="Proc. Natl. Acad. Sci. U.S.A.">
        <title>Characterization of the human growth hormone receptor gene and demonstration of a partial gene deletion in two patients with Laron-type dwarfism.</title>
        <authorList>
            <person name="Godowski P.J."/>
            <person name="Leung D.W."/>
            <person name="Meacham L.R."/>
            <person name="Galgani J.P."/>
            <person name="Hellmiss R."/>
            <person name="Keret R."/>
            <person name="Rotwein P.S."/>
            <person name="Parks J.S."/>
            <person name="Laron Z."/>
            <person name="Wood W.I."/>
        </authorList>
    </citation>
    <scope>NUCLEOTIDE SEQUENCE [GENOMIC DNA] (ISOFORM 1)</scope>
    <scope>VARIANT LEU-544</scope>
</reference>
<reference key="3">
    <citation type="journal article" date="1992" name="Mol. Endocrinol.">
        <title>Expression of a human growth hormone (hGH) receptor isoform is predicted by tissue-specific alternative splicing of exon 3 of the hGH receptor gene transcript.</title>
        <authorList>
            <person name="Urbanek M."/>
            <person name="MacLeod J.N."/>
            <person name="Cooke N.E."/>
            <person name="Liebhaber S.A."/>
        </authorList>
    </citation>
    <scope>NUCLEOTIDE SEQUENCE [MRNA] (ISOFORM 4)</scope>
    <scope>TISSUE SPECIFICITY (ISOFORM 4)</scope>
    <source>
        <tissue>Placenta</tissue>
    </source>
</reference>
<reference key="4">
    <citation type="journal article" date="1996" name="Proc. Natl. Acad. Sci. U.S.A.">
        <title>Alternatively spliced forms in the cytoplasmic domain of the human growth hormone (GH) receptor regulate its ability to generate a soluble GH-binding protein.</title>
        <authorList>
            <person name="Dastot F."/>
            <person name="Sobrier M.-L."/>
            <person name="Duquesnoy P."/>
            <person name="Duriez B."/>
            <person name="Goossens M."/>
            <person name="Amselem S."/>
        </authorList>
    </citation>
    <scope>NUCLEOTIDE SEQUENCE [MRNA] (ISOFORM 2)</scope>
    <scope>FUNCTION (ISOFORM 2)</scope>
    <scope>TISSUE SPECIFICITY</scope>
    <source>
        <tissue>Liver</tissue>
    </source>
</reference>
<reference key="5">
    <citation type="journal article" date="1997" name="J. Clin. Endocrinol. Metab.">
        <title>A membrane-fixed, truncated isoform of the human growth hormone receptor.</title>
        <authorList>
            <person name="Amit T."/>
            <person name="Bergman T."/>
            <person name="Dastot F."/>
            <person name="Youdim M.B.H."/>
            <person name="Amselem S."/>
            <person name="Hochberg Z."/>
        </authorList>
    </citation>
    <scope>NUCLEOTIDE SEQUENCE [MRNA] (ISOFORM 2)</scope>
    <scope>FUNCTION (ISOFORM 2)</scope>
    <scope>SUBCELLULAR LOCATION (ISOFORM 2)</scope>
</reference>
<reference key="6">
    <citation type="journal article" date="1997" name="Mol. Endocrinol.">
        <title>A short isoform of the human growth hormone receptor functions as a dominant negative inhibitor of the full-length receptor and generates large amounts of binding protein.</title>
        <authorList>
            <person name="Ross R.J."/>
            <person name="Esposito N."/>
            <person name="Shen X.Y."/>
            <person name="Von Laue S."/>
            <person name="Chew S.L."/>
            <person name="Dobson P.R."/>
            <person name="Postel-Vinay M.-C."/>
            <person name="Finidori J."/>
        </authorList>
    </citation>
    <scope>NUCLEOTIDE SEQUENCE [MRNA] (ISOFORMS 1; 2 AND 3)</scope>
    <source>
        <tissue>Liver</tissue>
    </source>
</reference>
<reference key="7">
    <citation type="submission" date="2000-07" db="EMBL/GenBank/DDBJ databases">
        <title>Comparing of nucleotide sequences of alternatively spliced region of mammalian growth hormone receptor genes.</title>
        <authorList>
            <person name="Orlovsky I.V."/>
            <person name="Borovikova I.E."/>
            <person name="Rubtsov P.M."/>
        </authorList>
    </citation>
    <scope>NUCLEOTIDE SEQUENCE [GENOMIC DNA] OF 263-336</scope>
</reference>
<reference key="8">
    <citation type="journal article" date="1993" name="J. Biol. Chem.">
        <title>Functional characterization of the alternatively spliced, placental human growth hormone receptor.</title>
        <authorList>
            <person name="Urbanek M."/>
            <person name="Russell J.E."/>
            <person name="Cooke N.E."/>
            <person name="Liebhaber S.A."/>
        </authorList>
    </citation>
    <scope>TISSUE SPECIFICITY (ISOFORM 4)</scope>
</reference>
<reference key="9">
    <citation type="journal article" date="2000" name="J. Biol. Chem.">
        <title>Species-specific alternative splice mimicry at the growth hormone receptor locus revealed by the lineage of retroelements during primate evolution.</title>
        <authorList>
            <person name="Pantel J."/>
            <person name="Machinis K."/>
            <person name="Sobrier M.-L."/>
            <person name="Duquesnoy P."/>
            <person name="Goossens M."/>
            <person name="Amselem S."/>
        </authorList>
    </citation>
    <scope>MOLECULAR MECHANISM OF PRODUCTION (ISOFORM 4)</scope>
</reference>
<reference key="10">
    <citation type="journal article" date="1990" name="J. Biol. Chem.">
        <title>The human growth hormone receptor. Secretion from Escherichia coli and disulfide bonding pattern of the extracellular binding domain.</title>
        <authorList>
            <person name="Fuh G."/>
            <person name="Mulkerrin M.G."/>
            <person name="Bass S."/>
            <person name="McFarland N."/>
            <person name="Brochier M."/>
            <person name="Bourrel J.H."/>
            <person name="Light D.R."/>
            <person name="Wells J.A."/>
        </authorList>
    </citation>
    <scope>DISULFIDE BONDS</scope>
</reference>
<reference key="11">
    <citation type="journal article" date="2002" name="Biochem. Biophys. Res. Commun.">
        <title>Identification of a region critical for proteolysis of the human growth hormone receptor.</title>
        <authorList>
            <person name="Conte F."/>
            <person name="Salles J.P."/>
            <person name="Raynal P."/>
            <person name="Fernandez L."/>
            <person name="Molinas C."/>
            <person name="Tauber M."/>
            <person name="Bieth E."/>
        </authorList>
    </citation>
    <scope>PROTEOLYTIC CLEAVAGE</scope>
    <scope>SITE CRITICAL TO PROTEOLYSIS</scope>
    <scope>MUTAGENESIS OF GLU-260; GLU-261 AND ASP-262</scope>
</reference>
<reference key="12">
    <citation type="journal article" date="2005" name="J. Clin. Invest.">
        <title>SOCS2 negatively regulates growth hormone action in vitro and in vivo.</title>
        <authorList>
            <person name="Greenhalgh C.J."/>
            <person name="Rico-Bautista E."/>
            <person name="Lorentzon M."/>
            <person name="Thaus A.L."/>
            <person name="Morgan P.O."/>
            <person name="Willson T.A."/>
            <person name="Zervoudakis P."/>
            <person name="Metcalf D."/>
            <person name="Street I."/>
            <person name="Nicola N.A."/>
            <person name="Nash A.D."/>
            <person name="Fabri L.J."/>
            <person name="Norstedt G."/>
            <person name="Ohlsson C."/>
            <person name="Flores-Morales A."/>
            <person name="Alexander W.S."/>
            <person name="Hilton D.J."/>
        </authorList>
    </citation>
    <scope>FUNCTION</scope>
    <scope>PHOSPHORYLATION AT TYR-487 AND TYR-595</scope>
    <scope>MUTAGENESIS OF TYR-487 AND TYR-595</scope>
</reference>
<reference key="13">
    <citation type="journal article" date="2014" name="J. Proteomics">
        <title>An enzyme assisted RP-RPLC approach for in-depth analysis of human liver phosphoproteome.</title>
        <authorList>
            <person name="Bian Y."/>
            <person name="Song C."/>
            <person name="Cheng K."/>
            <person name="Dong M."/>
            <person name="Wang F."/>
            <person name="Huang J."/>
            <person name="Sun D."/>
            <person name="Wang L."/>
            <person name="Ye M."/>
            <person name="Zou H."/>
        </authorList>
    </citation>
    <scope>PHOSPHORYLATION [LARGE SCALE ANALYSIS] AT SER-341</scope>
    <scope>IDENTIFICATION BY MASS SPECTROMETRY [LARGE SCALE ANALYSIS]</scope>
    <source>
        <tissue>Liver</tissue>
    </source>
</reference>
<reference key="14">
    <citation type="journal article" date="2011" name="PLoS ONE">
        <title>The SOCS2 ubiquitin ligase complex regulates growth hormone receptor levels.</title>
        <authorList>
            <person name="Vesterlund M."/>
            <person name="Zadjali F."/>
            <person name="Persson T."/>
            <person name="Nielsen M.L."/>
            <person name="Kessler B.M."/>
            <person name="Norstedt G."/>
            <person name="Flores-Morales A."/>
        </authorList>
    </citation>
    <scope>PHOSPHORYLATION AT TYR-487</scope>
    <scope>UBIQUITINATION</scope>
    <scope>MUTAGENESIS OF TYR-487 AND TYR-595</scope>
</reference>
<reference key="15">
    <citation type="journal article" date="2015" name="J. Biol. Chem.">
        <title>Biophysical studies on interactions and assembly of full-size E3 ubiquitin ligase: suppressor of cytokine signaling 2 (SOCS2)-elongin BC-cullin 5-ring box protein 2 (RBX2).</title>
        <authorList>
            <person name="Bulatov E."/>
            <person name="Martin E.M."/>
            <person name="Chatterjee S."/>
            <person name="Knebel A."/>
            <person name="Shimamura S."/>
            <person name="Konijnenberg A."/>
            <person name="Johnson C."/>
            <person name="Zinn N."/>
            <person name="Grandi P."/>
            <person name="Sobott F."/>
            <person name="Ciulli A."/>
        </authorList>
    </citation>
    <scope>PHOSPHORYLATION AT TYR-595</scope>
    <scope>UBIQUITINATION</scope>
</reference>
<reference key="16">
    <citation type="journal article" date="2021" name="Nat. Commun.">
        <title>Discovery of an exosite on the SOCS2-SH2 domain that enhances SH2 binding to phosphorylated ligands.</title>
        <authorList>
            <person name="Linossi E.M."/>
            <person name="Li K."/>
            <person name="Veggiani G."/>
            <person name="Tan C."/>
            <person name="Dehkhoda F."/>
            <person name="Hockings C."/>
            <person name="Calleja D.J."/>
            <person name="Keating N."/>
            <person name="Feltham R."/>
            <person name="Brooks A.J."/>
            <person name="Li S.S."/>
            <person name="Sidhu S.S."/>
            <person name="Babon J.J."/>
            <person name="Kershaw N.J."/>
            <person name="Nicholson S.E."/>
        </authorList>
    </citation>
    <scope>UBIQUITINATION</scope>
</reference>
<reference key="17">
    <citation type="journal article" date="1992" name="Science">
        <title>Human growth hormone and extracellular domain of its receptor: crystal structure of the complex.</title>
        <authorList>
            <person name="de Vos A.M."/>
            <person name="Ultsch M."/>
            <person name="Kossiakoff A.A."/>
        </authorList>
    </citation>
    <scope>X-RAY CRYSTALLOGRAPHY (2.8 ANGSTROMS) OF 19-254 IN COMPLEX WITH GROWTH HORMONE</scope>
    <scope>FUNCTION</scope>
</reference>
<reference key="18">
    <citation type="journal article" date="1996" name="J. Biol. Chem.">
        <title>Crystal structure of an antagonist mutant of human growth hormone, G120R, in complex with its receptor at 2.9-A resolution.</title>
        <authorList>
            <person name="Sundstroem M."/>
            <person name="Lundqvist T."/>
            <person name="Roedin J."/>
            <person name="Giebel L.B."/>
            <person name="Milligan D."/>
            <person name="Norstedt G."/>
        </authorList>
    </citation>
    <scope>X-RAY CRYSTALLOGRAPHY (2.5 ANGSTROMS) OF 19-256 IN COMPLEX WITH GROWTH HORMONE</scope>
    <scope>FUNCTION</scope>
    <scope>SUBUNIT</scope>
</reference>
<reference evidence="43 44" key="19">
    <citation type="journal article" date="2019" name="Nat. Commun.">
        <title>Structural insights into substrate recognition by the SOCS2 E3 ubiquitin ligase.</title>
        <authorList>
            <person name="Kung W.W."/>
            <person name="Ramachandran S."/>
            <person name="Makukhin N."/>
            <person name="Bruno E."/>
            <person name="Ciulli A."/>
        </authorList>
    </citation>
    <scope>X-RAY CRYSTALLOGRAPHY (1.98 ANGSTROMS) OF 591-601 IN COMPLEX SOCS2 WITH ELOB AND ELOC</scope>
    <scope>UBIQUITINATION</scope>
</reference>
<reference key="20">
    <citation type="journal article" date="1989" name="N. Engl. J. Med.">
        <title>Laron dwarfism and mutations of the growth hormone-receptor gene.</title>
        <authorList>
            <person name="Amselem S."/>
            <person name="Duquesnoy P."/>
            <person name="Attree O."/>
            <person name="Novelli G."/>
            <person name="Bousnina S."/>
            <person name="Postel-Vinay M.-C."/>
            <person name="Goossens M."/>
        </authorList>
    </citation>
    <scope>VARIANT LARS SER-114</scope>
</reference>
<reference key="21">
    <citation type="journal article" date="1993" name="J. Clin. Endocrinol. Metab.">
        <title>Amino acid substitutions in the intracellular part of the growth hormone receptor in a patient with the Laron syndrome.</title>
        <authorList>
            <person name="Kou K."/>
            <person name="Lajara R."/>
            <person name="Rotwein P."/>
        </authorList>
    </citation>
    <scope>VARIANT PHE-440</scope>
</reference>
<reference key="22">
    <citation type="journal article" date="1993" name="Hum. Mol. Genet.">
        <title>Spectrum of growth hormone receptor mutations and associated haplotypes in Laron syndrome.</title>
        <authorList>
            <person name="Amselem S."/>
            <person name="Duquesnoy P."/>
            <person name="Duriez B."/>
            <person name="Dastot F."/>
            <person name="Sobrier M.-L."/>
            <person name="Valleix S."/>
            <person name="Goossens M."/>
        </authorList>
    </citation>
    <scope>VARIANTS LARS LYS-89; GLN-149; ASP-162; CYS-179 AND GLY-229</scope>
</reference>
<reference key="23">
    <citation type="journal article" date="1993" name="J. Clin. Invest.">
        <title>Lack of hormone binding in COS-7 cells expressing a mutated growth hormone receptor found in Laron dwarfism.</title>
        <authorList>
            <person name="Edery M."/>
            <person name="Rozakis-Adcock M."/>
            <person name="Goujon L."/>
            <person name="Finidori J."/>
            <person name="Levi-Meyrueis C."/>
            <person name="Paly J."/>
            <person name="Djiane J."/>
            <person name="Postel-Vinay M.-C."/>
            <person name="Kelly P.A."/>
        </authorList>
    </citation>
    <scope>CHARACTERIZATION OF VARIANT LARS SER-114</scope>
</reference>
<reference key="24">
    <citation type="journal article" date="1994" name="EMBO J.">
        <title>A single amino acid substitution in the exoplasmic domain of the human growth hormone (GH) receptor confers familial GH resistance (Laron syndrome) with positive GH-binding activity by abolishing receptor homodimerization.</title>
        <authorList>
            <person name="Duquesnoy P."/>
            <person name="Sobrier M.-L."/>
            <person name="Duriez B."/>
            <person name="Dastot F."/>
            <person name="Buchanan C.R."/>
            <person name="Savage M.O."/>
            <person name="Preece M.A."/>
            <person name="Craescu C.T."/>
            <person name="Blouquit Y."/>
            <person name="Goossens M."/>
            <person name="Amselem S."/>
        </authorList>
    </citation>
    <scope>VARIANT LARS HIS-170</scope>
</reference>
<reference key="25">
    <citation type="journal article" date="1995" name="N. Engl. J. Med.">
        <title>Mutations of the growth hormone receptor in children with idiopathic short stature.</title>
        <authorList>
            <person name="Goddard A.D."/>
            <person name="Covello R."/>
            <person name="Luoh S.-M."/>
            <person name="Clackson T."/>
            <person name="Attie K.M."/>
            <person name="Gesundheit N."/>
            <person name="Rundle A.C."/>
            <person name="Wells J.A."/>
            <person name="Carlsson L.M.S."/>
        </authorList>
    </citation>
    <scope>VARIANTS GHIP LYS-62 AND CYS-179</scope>
    <scope>VARIANTS HIS-229 AND ASP-242</scope>
</reference>
<reference key="26">
    <citation type="journal article" date="1997" name="J. Clin. Endocrinol. Metab.">
        <title>Nine novel growth hormone receptor gene mutations in patients with Laron syndrome.</title>
        <authorList>
            <person name="Sobrier M.-L."/>
            <person name="Dastot F."/>
            <person name="Duquesnoy P."/>
            <person name="Kandemir N."/>
            <person name="Yordam N."/>
            <person name="Goossens M."/>
            <person name="Amselem S."/>
        </authorList>
    </citation>
    <scope>VARIANTS LARS SER-56; LEU-58 AND ARG-68</scope>
</reference>
<reference key="27">
    <citation type="journal article" date="1998" name="J. Clin. Endocrinol. Metab.">
        <title>A novel mutation affecting the interdomain link region of the growth hormone receptor in a Vietnamese girl, and response to long-term treatment with recombinant human insulin-like growth factor-I and luteinizing hormone-releasing hormone analogue.</title>
        <authorList>
            <person name="Walker J.L."/>
            <person name="Crock P.A."/>
            <person name="Behncken S.N."/>
            <person name="Rowlinson S.W."/>
            <person name="Nicholson L.M."/>
            <person name="Boulton T.J.C."/>
            <person name="Waters M.J."/>
        </authorList>
    </citation>
    <scope>VARIANT LARS GLN-149</scope>
    <scope>CHARACTERIZATION OF VARIANT LARS GLN-149</scope>
</reference>
<reference key="28">
    <citation type="journal article" date="1998" name="J. Clin. Endocrinol. Metab.">
        <title>Growth hormone receptor mutations in children with idiopathic short stature.</title>
        <authorList>
            <person name="Sanchez J.E."/>
            <person name="Perera E."/>
            <person name="Baumbach L."/>
            <person name="Cleveland W.W."/>
        </authorList>
    </citation>
    <scope>VARIANT ILE-162</scope>
</reference>
<reference key="29">
    <citation type="journal article" date="1998" name="J. Clin. Endocrinol. Metab.">
        <title>Four contiguous amino acid substitutions, identified in patients with Laron syndrome, differently affect the binding affinity and intracellular trafficking of the growth hormone receptor.</title>
        <authorList>
            <person name="Wojcik J."/>
            <person name="Berg M.A."/>
            <person name="Esposito N."/>
            <person name="Geffner M.E."/>
            <person name="Sakati N."/>
            <person name="Reiter E.O."/>
            <person name="Dower S."/>
            <person name="Francke U."/>
            <person name="Postel-Vinay M.-C."/>
            <person name="Finidori J."/>
        </authorList>
    </citation>
    <scope>VARIANTS LARS HIS-170; THR-171; PRO-172 AND GLY-173</scope>
    <scope>CHARACTERIZATION OF VARIANTS LARS THR-171; PRO-172 AND GLY-173</scope>
</reference>
<reference key="30">
    <citation type="journal article" date="1999" name="Nat. Genet.">
        <title>Characterization of single-nucleotide polymorphisms in coding regions of human genes.</title>
        <authorList>
            <person name="Cargill M."/>
            <person name="Altshuler D."/>
            <person name="Ireland J."/>
            <person name="Sklar P."/>
            <person name="Ardlie K."/>
            <person name="Patil N."/>
            <person name="Shaw N."/>
            <person name="Lane C.R."/>
            <person name="Lim E.P."/>
            <person name="Kalyanaraman N."/>
            <person name="Nemesh J."/>
            <person name="Ziaugra L."/>
            <person name="Friedland L."/>
            <person name="Rolfe A."/>
            <person name="Warrington J."/>
            <person name="Lipshutz R."/>
            <person name="Daley G.Q."/>
            <person name="Lander E.S."/>
        </authorList>
    </citation>
    <scope>VARIANTS HIS-179; HIS-229; PHE-440; THR-495; LEU-544 AND THR-579</scope>
</reference>
<reference key="31">
    <citation type="journal article" date="1999" name="Nat. Genet.">
        <authorList>
            <person name="Cargill M."/>
            <person name="Altshuler D."/>
            <person name="Ireland J."/>
            <person name="Sklar P."/>
            <person name="Ardlie K."/>
            <person name="Patil N."/>
            <person name="Shaw N."/>
            <person name="Lane C.R."/>
            <person name="Lim E.P."/>
            <person name="Kalyanaraman N."/>
            <person name="Nemesh J."/>
            <person name="Ziaugra L."/>
            <person name="Friedland L."/>
            <person name="Rolfe A."/>
            <person name="Warrington J."/>
            <person name="Lipshutz R."/>
            <person name="Daley G.Q."/>
            <person name="Lander E.S."/>
        </authorList>
    </citation>
    <scope>ERRATUM OF PUBMED:10391209</scope>
</reference>
<reference key="32">
    <citation type="journal article" date="2000" name="Eur. J. Endocrinol.">
        <title>Characterisation of novel missense mutations in the GH receptor gene causing severe growth retardation.</title>
        <authorList>
            <person name="Enberg B."/>
            <person name="Luthman H."/>
            <person name="Segnestam K."/>
            <person name="Ritzen E.M."/>
            <person name="Sundstroem M."/>
            <person name="Norstedt G."/>
        </authorList>
    </citation>
    <scope>VARIANTS LARS CYS-226 AND ASN-262</scope>
</reference>
<reference key="33">
    <citation type="journal article" date="2003" name="Am. J. Med. Genet. A">
        <title>Growth hormone receptor variant (L526I) modifies plasma HDL cholesterol phenotype in familial hypercholesterolemia: intra-familial association study in an eight-generation hyperlipidemic kindred.</title>
        <authorList>
            <person name="Takada D."/>
            <person name="Ezura Y."/>
            <person name="Ono S."/>
            <person name="Iino Y."/>
            <person name="Katayama Y."/>
            <person name="Xin Y."/>
            <person name="Wu L.L."/>
            <person name="Larringa-Shum S."/>
            <person name="Stephenson S.H."/>
            <person name="Hunt S.C."/>
            <person name="Hopkins P.N."/>
            <person name="Emi M."/>
        </authorList>
    </citation>
    <scope>VARIANT LEU-544</scope>
</reference>
<reference key="34">
    <citation type="journal article" date="2004" name="Clin. Endocrinol. (Oxf.)">
        <title>The first homozygous mutation (S226I) in the highly-conserved WSXWS-like motif of the GH receptor causing Laron syndrome: suppression of GH secretion by GnRH analogue therapy not restored by dihydrotestosterone administration.</title>
        <authorList>
            <person name="Jorge A.A.L."/>
            <person name="Souza S.C.A.L."/>
            <person name="Arnhold I.J.P."/>
            <person name="Mendonca B.B."/>
        </authorList>
    </citation>
    <scope>VARIANT LARS ILE-244</scope>
</reference>
<keyword id="KW-0002">3D-structure</keyword>
<keyword id="KW-0025">Alternative splicing</keyword>
<keyword id="KW-1003">Cell membrane</keyword>
<keyword id="KW-0903">Direct protein sequencing</keyword>
<keyword id="KW-0225">Disease variant</keyword>
<keyword id="KW-1015">Disulfide bond</keyword>
<keyword id="KW-0242">Dwarfism</keyword>
<keyword id="KW-0254">Endocytosis</keyword>
<keyword id="KW-0325">Glycoprotein</keyword>
<keyword id="KW-0472">Membrane</keyword>
<keyword id="KW-0597">Phosphoprotein</keyword>
<keyword id="KW-1267">Proteomics identification</keyword>
<keyword id="KW-0675">Receptor</keyword>
<keyword id="KW-1185">Reference proteome</keyword>
<keyword id="KW-0964">Secreted</keyword>
<keyword id="KW-0732">Signal</keyword>
<keyword id="KW-0812">Transmembrane</keyword>
<keyword id="KW-1133">Transmembrane helix</keyword>
<keyword id="KW-0832">Ubl conjugation</keyword>
<feature type="signal peptide" evidence="3">
    <location>
        <begin position="1"/>
        <end position="18"/>
    </location>
</feature>
<feature type="chain" id="PRO_0000010957" description="Growth hormone receptor">
    <location>
        <begin position="19"/>
        <end position="638"/>
    </location>
</feature>
<feature type="chain" id="PRO_0000010958" description="Growth hormone-binding protein" evidence="2">
    <location>
        <begin position="19"/>
        <end position="256"/>
    </location>
</feature>
<feature type="topological domain" description="Extracellular" evidence="3">
    <location>
        <begin position="19"/>
        <end position="264"/>
    </location>
</feature>
<feature type="transmembrane region" description="Helical" evidence="3">
    <location>
        <begin position="265"/>
        <end position="288"/>
    </location>
</feature>
<feature type="topological domain" description="Cytoplasmic" evidence="3">
    <location>
        <begin position="289"/>
        <end position="638"/>
    </location>
</feature>
<feature type="domain" description="Fibronectin type-III" evidence="4">
    <location>
        <begin position="151"/>
        <end position="254"/>
    </location>
</feature>
<feature type="region of interest" description="Required for ADAM17-mediated proteolysis" evidence="2">
    <location>
        <begin position="260"/>
        <end position="262"/>
    </location>
</feature>
<feature type="region of interest" description="Required for JAK2 binding" evidence="1">
    <location>
        <begin position="294"/>
        <end position="379"/>
    </location>
</feature>
<feature type="region of interest" description="Disordered" evidence="5">
    <location>
        <begin position="353"/>
        <end position="391"/>
    </location>
</feature>
<feature type="short sequence motif" description="WSXWS motif" evidence="42">
    <location>
        <begin position="240"/>
        <end position="244"/>
    </location>
</feature>
<feature type="short sequence motif" description="Box 1 motif" evidence="1">
    <location>
        <begin position="297"/>
        <end position="305"/>
    </location>
</feature>
<feature type="short sequence motif" description="UbE motif" evidence="2">
    <location>
        <begin position="340"/>
        <end position="349"/>
    </location>
</feature>
<feature type="compositionally biased region" description="Basic and acidic residues" evidence="5">
    <location>
        <begin position="362"/>
        <end position="384"/>
    </location>
</feature>
<feature type="modified residue" description="Phosphoserine" evidence="45">
    <location>
        <position position="341"/>
    </location>
</feature>
<feature type="modified residue" description="Phosphotyrosine; by JAK2" evidence="13 15">
    <location>
        <position position="487"/>
    </location>
</feature>
<feature type="modified residue" description="Phosphotyrosine; by JAK2" evidence="13 17">
    <location>
        <position position="595"/>
    </location>
</feature>
<feature type="glycosylation site" description="N-linked (GlcNAc...) asparagine" evidence="3">
    <location>
        <position position="46"/>
    </location>
</feature>
<feature type="glycosylation site" description="N-linked (GlcNAc...) asparagine" evidence="3">
    <location>
        <position position="115"/>
    </location>
</feature>
<feature type="glycosylation site" description="N-linked (GlcNAc...) asparagine" evidence="3">
    <location>
        <position position="156"/>
    </location>
</feature>
<feature type="glycosylation site" description="N-linked (GlcNAc...) asparagine" evidence="3">
    <location>
        <position position="161"/>
    </location>
</feature>
<feature type="glycosylation site" description="N-linked (GlcNAc...) asparagine" evidence="3">
    <location>
        <position position="200"/>
    </location>
</feature>
<feature type="disulfide bond" evidence="16">
    <location>
        <begin position="56"/>
        <end position="66"/>
    </location>
</feature>
<feature type="disulfide bond" evidence="16">
    <location>
        <begin position="101"/>
        <end position="112"/>
    </location>
</feature>
<feature type="disulfide bond" evidence="16">
    <location>
        <begin position="126"/>
        <end position="140"/>
    </location>
</feature>
<feature type="splice variant" id="VSP_010225" description="In isoform 4." evidence="36">
    <original>A</original>
    <variation>D</variation>
    <location>
        <position position="24"/>
    </location>
</feature>
<feature type="splice variant" id="VSP_010226" description="In isoform 4." evidence="36">
    <location>
        <begin position="25"/>
        <end position="46"/>
    </location>
</feature>
<feature type="splice variant" id="VSP_010227" description="In isoform 2." evidence="38 39 40">
    <original>RIKMLI</original>
    <variation>SSSSKD</variation>
    <location>
        <begin position="292"/>
        <end position="297"/>
    </location>
</feature>
<feature type="splice variant" id="VSP_010229" description="In isoform 3." evidence="39">
    <original>RIK</original>
    <variation>KEN</variation>
    <location>
        <begin position="292"/>
        <end position="294"/>
    </location>
</feature>
<feature type="splice variant" id="VSP_010230" description="In isoform 3." evidence="39">
    <location>
        <begin position="295"/>
        <end position="638"/>
    </location>
</feature>
<feature type="splice variant" id="VSP_010228" description="In isoform 2." evidence="38 39 40">
    <location>
        <begin position="298"/>
        <end position="638"/>
    </location>
</feature>
<feature type="sequence variant" id="VAR_018426" description="In LARS." evidence="31">
    <original>C</original>
    <variation>S</variation>
    <location>
        <position position="56"/>
    </location>
</feature>
<feature type="sequence variant" id="VAR_018427" description="In LARS." evidence="31">
    <original>S</original>
    <variation>L</variation>
    <location>
        <position position="58"/>
    </location>
</feature>
<feature type="sequence variant" id="VAR_002708" description="In GHIP; dbSNP:rs121909361." evidence="23">
    <original>E</original>
    <variation>K</variation>
    <location>
        <position position="62"/>
    </location>
</feature>
<feature type="sequence variant" id="VAR_018428" description="In LARS." evidence="31">
    <original>W</original>
    <variation>R</variation>
    <location>
        <position position="68"/>
    </location>
</feature>
<feature type="sequence variant" id="VAR_002709" description="In LARS." evidence="28">
    <original>R</original>
    <variation>K</variation>
    <location>
        <position position="89"/>
    </location>
</feature>
<feature type="sequence variant" id="VAR_002710" description="In LARS; loss of ability to bind ligand; dbSNP:rs121909357." evidence="18 27">
    <original>F</original>
    <variation>S</variation>
    <location>
        <position position="114"/>
    </location>
</feature>
<feature type="sequence variant" id="VAR_002711" description="In LARS.">
    <original>V</original>
    <variation>A</variation>
    <location>
        <position position="143"/>
    </location>
</feature>
<feature type="sequence variant" id="VAR_018429" description="In LARS; disrupts GH binding; dbSNP:rs121909365." evidence="28 33">
    <original>P</original>
    <variation>Q</variation>
    <location>
        <position position="149"/>
    </location>
</feature>
<feature type="sequence variant" id="VAR_002712" description="In LARS." evidence="28">
    <original>V</original>
    <variation>D</variation>
    <location>
        <position position="162"/>
    </location>
</feature>
<feature type="sequence variant" id="VAR_020002" description="In dbSNP:rs6413484.">
    <original>V</original>
    <variation>F</variation>
    <location>
        <position position="162"/>
    </location>
</feature>
<feature type="sequence variant" id="VAR_018430" description="Found in a patient with idiopathic short stature; uncertain significance; dbSNP:rs6413484." evidence="34">
    <original>V</original>
    <variation>I</variation>
    <location>
        <position position="162"/>
    </location>
</feature>
<feature type="sequence variant" id="VAR_002713" description="In LARS; abolishes receptor homodimerization; dbSNP:rs121909366." evidence="24 35">
    <original>D</original>
    <variation>H</variation>
    <location>
        <position position="170"/>
    </location>
</feature>
<feature type="sequence variant" id="VAR_018431" description="In LARS; almost completely abolishes GH-binding at cell surface: 53% binding to membrane fractions; dbSNP:rs121909367." evidence="35">
    <original>I</original>
    <variation>T</variation>
    <location>
        <position position="171"/>
    </location>
</feature>
<feature type="sequence variant" id="VAR_018432" description="In LARS; almost completely abolishes GH-binding at cell surface and in membrane fractions; dbSNP:rs121909368." evidence="35">
    <original>Q</original>
    <variation>P</variation>
    <location>
        <position position="172"/>
    </location>
</feature>
<feature type="sequence variant" id="VAR_018433" description="In LARS; almost completely abolishes GH-binding at cell surface: 26% binding to membrane fractions; dbSNP:rs121909369." evidence="35">
    <original>V</original>
    <variation>G</variation>
    <location>
        <position position="173"/>
    </location>
</feature>
<feature type="sequence variant" id="VAR_002714" description="In LARS and GHIP; dbSNP:rs121909362." evidence="23 28">
    <original>R</original>
    <variation>C</variation>
    <location>
        <position position="179"/>
    </location>
</feature>
<feature type="sequence variant" id="VAR_013937" description="In dbSNP:rs6181." evidence="6">
    <original>R</original>
    <variation>H</variation>
    <location>
        <position position="179"/>
    </location>
</feature>
<feature type="sequence variant" id="VAR_018434" description="In LARS." evidence="8">
    <original>Y</original>
    <variation>C</variation>
    <location>
        <position position="226"/>
    </location>
</feature>
<feature type="sequence variant" id="VAR_002715" description="In LARS." evidence="28">
    <original>R</original>
    <variation>G</variation>
    <location>
        <position position="229"/>
    </location>
</feature>
<feature type="sequence variant" id="VAR_013938" description="Found in a patient with idiopathic short stature; uncertain significance; dbSNP:rs6177." evidence="6 23">
    <original>R</original>
    <variation>H</variation>
    <location>
        <position position="229"/>
    </location>
</feature>
<feature type="sequence variant" id="VAR_002716" description="Found in a patient with idiopathic short stature; uncertain significance; dbSNP:rs45588036." evidence="23">
    <original>E</original>
    <variation>D</variation>
    <location>
        <position position="242"/>
    </location>
</feature>
<feature type="sequence variant" id="VAR_018435" description="In LARS; dbSNP:rs1164396446." evidence="11">
    <original>S</original>
    <variation>I</variation>
    <location>
        <position position="244"/>
    </location>
</feature>
<feature type="sequence variant" id="VAR_018436" description="In LARS." evidence="8">
    <original>D</original>
    <variation>N</variation>
    <location>
        <position position="262"/>
    </location>
</feature>
<feature type="sequence variant" id="VAR_013939" description="In dbSNP:rs6182." evidence="6 26">
    <original>C</original>
    <variation>F</variation>
    <location>
        <position position="440"/>
    </location>
</feature>
<feature type="sequence variant" id="VAR_032704" description="In dbSNP:rs34283856.">
    <original>E</original>
    <variation>K</variation>
    <location>
        <position position="465"/>
    </location>
</feature>
<feature type="sequence variant" id="VAR_013940" description="In dbSNP:rs6183." evidence="6">
    <original>P</original>
    <variation>T</variation>
    <location>
        <position position="495"/>
    </location>
</feature>
<feature type="sequence variant" id="VAR_013941" description="In dbSNP:rs6180." evidence="6 10 19">
    <original>I</original>
    <variation>L</variation>
    <location>
        <position position="544"/>
    </location>
</feature>
<feature type="sequence variant" id="VAR_013942" description="In dbSNP:rs6184." evidence="6">
    <original>P</original>
    <variation>T</variation>
    <location>
        <position position="579"/>
    </location>
</feature>
<feature type="mutagenesis site" description="No change in shedding activity: No change in hormone binding." evidence="9">
    <original>E</original>
    <variation>A</variation>
    <location>
        <position position="260"/>
    </location>
</feature>
<feature type="mutagenesis site" description="No change in shedding activity: No change in hormone binding." evidence="9">
    <original>E</original>
    <variation>A</variation>
    <location>
        <position position="261"/>
    </location>
</feature>
<feature type="mutagenesis site" description="No change in shedding activity: No change in hormone binding." evidence="9">
    <original>D</original>
    <variation>A</variation>
    <location>
        <position position="262"/>
    </location>
</feature>
<feature type="mutagenesis site" description="Increased growth hormone receptor signaling pathway due to decreased ubiquitination by the ECS(SOCS2) complex; when associated with F-595." evidence="13 15">
    <original>Y</original>
    <variation>F</variation>
    <location>
        <position position="487"/>
    </location>
</feature>
<feature type="mutagenesis site" description="Increased growth hormone receptor signaling pathway due to decreased ubiquitination by the ECS(SOCS2) complex; when associated with F-487." evidence="13 15">
    <original>Y</original>
    <variation>F</variation>
    <location>
        <position position="595"/>
    </location>
</feature>
<feature type="strand" evidence="46">
    <location>
        <begin position="53"/>
        <end position="62"/>
    </location>
</feature>
<feature type="strand" evidence="46">
    <location>
        <begin position="64"/>
        <end position="68"/>
    </location>
</feature>
<feature type="strand" evidence="46">
    <location>
        <begin position="83"/>
        <end position="88"/>
    </location>
</feature>
<feature type="turn" evidence="47">
    <location>
        <begin position="93"/>
        <end position="96"/>
    </location>
</feature>
<feature type="turn" evidence="49">
    <location>
        <begin position="104"/>
        <end position="107"/>
    </location>
</feature>
<feature type="strand" evidence="46">
    <location>
        <begin position="111"/>
        <end position="114"/>
    </location>
</feature>
<feature type="helix" evidence="46">
    <location>
        <begin position="116"/>
        <end position="118"/>
    </location>
</feature>
<feature type="strand" evidence="46">
    <location>
        <begin position="121"/>
        <end position="131"/>
    </location>
</feature>
<feature type="strand" evidence="46">
    <location>
        <begin position="134"/>
        <end position="142"/>
    </location>
</feature>
<feature type="helix" evidence="46">
    <location>
        <begin position="143"/>
        <end position="146"/>
    </location>
</feature>
<feature type="strand" evidence="46">
    <location>
        <begin position="153"/>
        <end position="159"/>
    </location>
</feature>
<feature type="strand" evidence="46">
    <location>
        <begin position="167"/>
        <end position="176"/>
    </location>
</feature>
<feature type="turn" evidence="46">
    <location>
        <begin position="183"/>
        <end position="186"/>
    </location>
</feature>
<feature type="strand" evidence="46">
    <location>
        <begin position="190"/>
        <end position="198"/>
    </location>
</feature>
<feature type="strand" evidence="46">
    <location>
        <begin position="210"/>
        <end position="221"/>
    </location>
</feature>
<feature type="strand" evidence="46">
    <location>
        <begin position="226"/>
        <end position="234"/>
    </location>
</feature>
<feature type="strand" evidence="48">
    <location>
        <begin position="240"/>
        <end position="243"/>
    </location>
</feature>
<feature type="strand" evidence="46">
    <location>
        <begin position="247"/>
        <end position="249"/>
    </location>
</feature>
<feature type="helix" evidence="51">
    <location>
        <begin position="259"/>
        <end position="261"/>
    </location>
</feature>
<feature type="helix" evidence="50">
    <location>
        <begin position="266"/>
        <end position="292"/>
    </location>
</feature>
<organism>
    <name type="scientific">Homo sapiens</name>
    <name type="common">Human</name>
    <dbReference type="NCBI Taxonomy" id="9606"/>
    <lineage>
        <taxon>Eukaryota</taxon>
        <taxon>Metazoa</taxon>
        <taxon>Chordata</taxon>
        <taxon>Craniata</taxon>
        <taxon>Vertebrata</taxon>
        <taxon>Euteleostomi</taxon>
        <taxon>Mammalia</taxon>
        <taxon>Eutheria</taxon>
        <taxon>Euarchontoglires</taxon>
        <taxon>Primates</taxon>
        <taxon>Haplorrhini</taxon>
        <taxon>Catarrhini</taxon>
        <taxon>Hominidae</taxon>
        <taxon>Homo</taxon>
    </lineage>
</organism>
<proteinExistence type="evidence at protein level"/>
<dbReference type="EMBL" id="X06562">
    <property type="protein sequence ID" value="CAA29808.1"/>
    <property type="molecule type" value="mRNA"/>
</dbReference>
<dbReference type="EMBL" id="M28466">
    <property type="protein sequence ID" value="AAA52555.1"/>
    <property type="molecule type" value="Genomic_DNA"/>
</dbReference>
<dbReference type="EMBL" id="M28458">
    <property type="protein sequence ID" value="AAA52555.1"/>
    <property type="status" value="JOINED"/>
    <property type="molecule type" value="Genomic_DNA"/>
</dbReference>
<dbReference type="EMBL" id="M28459">
    <property type="protein sequence ID" value="AAA52555.1"/>
    <property type="status" value="JOINED"/>
    <property type="molecule type" value="Genomic_DNA"/>
</dbReference>
<dbReference type="EMBL" id="M28460">
    <property type="protein sequence ID" value="AAA52555.1"/>
    <property type="status" value="JOINED"/>
    <property type="molecule type" value="Genomic_DNA"/>
</dbReference>
<dbReference type="EMBL" id="M28461">
    <property type="protein sequence ID" value="AAA52555.1"/>
    <property type="status" value="JOINED"/>
    <property type="molecule type" value="Genomic_DNA"/>
</dbReference>
<dbReference type="EMBL" id="M28462">
    <property type="protein sequence ID" value="AAA52555.1"/>
    <property type="status" value="JOINED"/>
    <property type="molecule type" value="Genomic_DNA"/>
</dbReference>
<dbReference type="EMBL" id="M28463">
    <property type="protein sequence ID" value="AAA52555.1"/>
    <property type="status" value="JOINED"/>
    <property type="molecule type" value="Genomic_DNA"/>
</dbReference>
<dbReference type="EMBL" id="M28464">
    <property type="protein sequence ID" value="AAA52555.1"/>
    <property type="status" value="JOINED"/>
    <property type="molecule type" value="Genomic_DNA"/>
</dbReference>
<dbReference type="EMBL" id="M28465">
    <property type="protein sequence ID" value="AAA52555.1"/>
    <property type="status" value="JOINED"/>
    <property type="molecule type" value="Genomic_DNA"/>
</dbReference>
<dbReference type="EMBL" id="AJ278681">
    <property type="protein sequence ID" value="CAC06613.1"/>
    <property type="molecule type" value="Genomic_DNA"/>
</dbReference>
<dbReference type="CCDS" id="CCDS3940.1">
    <molecule id="P10912-1"/>
</dbReference>
<dbReference type="CCDS" id="CCDS56364.1">
    <molecule id="P10912-4"/>
</dbReference>
<dbReference type="PIR" id="A33991">
    <property type="entry name" value="A33991"/>
</dbReference>
<dbReference type="RefSeq" id="NP_000154.1">
    <molecule id="P10912-1"/>
    <property type="nucleotide sequence ID" value="NM_000163.5"/>
</dbReference>
<dbReference type="RefSeq" id="NP_001229328.1">
    <property type="nucleotide sequence ID" value="NM_001242399.2"/>
</dbReference>
<dbReference type="RefSeq" id="NP_001229329.1">
    <molecule id="P10912-1"/>
    <property type="nucleotide sequence ID" value="NM_001242400.2"/>
</dbReference>
<dbReference type="RefSeq" id="NP_001229330.1">
    <molecule id="P10912-1"/>
    <property type="nucleotide sequence ID" value="NM_001242401.4"/>
</dbReference>
<dbReference type="RefSeq" id="NP_001229331.1">
    <molecule id="P10912-1"/>
    <property type="nucleotide sequence ID" value="NM_001242402.2"/>
</dbReference>
<dbReference type="RefSeq" id="NP_001229332.1">
    <molecule id="P10912-1"/>
    <property type="nucleotide sequence ID" value="NM_001242403.3"/>
</dbReference>
<dbReference type="RefSeq" id="NP_001229333.1">
    <molecule id="P10912-1"/>
    <property type="nucleotide sequence ID" value="NM_001242404.2"/>
</dbReference>
<dbReference type="RefSeq" id="NP_001229334.1">
    <molecule id="P10912-1"/>
    <property type="nucleotide sequence ID" value="NM_001242405.2"/>
</dbReference>
<dbReference type="RefSeq" id="NP_001229335.1">
    <molecule id="P10912-1"/>
    <property type="nucleotide sequence ID" value="NM_001242406.2"/>
</dbReference>
<dbReference type="RefSeq" id="NP_001229389.1">
    <molecule id="P10912-4"/>
    <property type="nucleotide sequence ID" value="NM_001242460.2"/>
</dbReference>
<dbReference type="RefSeq" id="NP_001229391.1">
    <property type="nucleotide sequence ID" value="NM_001242462.1"/>
</dbReference>
<dbReference type="PDB" id="1A22">
    <property type="method" value="X-ray"/>
    <property type="resolution" value="2.60 A"/>
    <property type="chains" value="B=19-256"/>
</dbReference>
<dbReference type="PDB" id="1AXI">
    <property type="method" value="X-ray"/>
    <property type="resolution" value="2.10 A"/>
    <property type="chains" value="B=19-254"/>
</dbReference>
<dbReference type="PDB" id="1HWG">
    <property type="method" value="X-ray"/>
    <property type="resolution" value="2.50 A"/>
    <property type="chains" value="B/C=19-255"/>
</dbReference>
<dbReference type="PDB" id="1HWH">
    <property type="method" value="X-ray"/>
    <property type="resolution" value="2.90 A"/>
    <property type="chains" value="B=19-255"/>
</dbReference>
<dbReference type="PDB" id="1KF9">
    <property type="method" value="X-ray"/>
    <property type="resolution" value="2.60 A"/>
    <property type="chains" value="B/C/E/F=19-256"/>
</dbReference>
<dbReference type="PDB" id="2AEW">
    <property type="method" value="X-ray"/>
    <property type="resolution" value="2.70 A"/>
    <property type="chains" value="A/B=47-251"/>
</dbReference>
<dbReference type="PDB" id="3HHR">
    <property type="method" value="X-ray"/>
    <property type="resolution" value="2.80 A"/>
    <property type="chains" value="B/C=50-254"/>
</dbReference>
<dbReference type="PDB" id="5OEK">
    <property type="method" value="NMR"/>
    <property type="chains" value="A/B=254-294"/>
</dbReference>
<dbReference type="PDB" id="5OHD">
    <property type="method" value="NMR"/>
    <property type="chains" value="A/B=254-294"/>
</dbReference>
<dbReference type="PDB" id="6I5J">
    <property type="method" value="X-ray"/>
    <property type="resolution" value="2.80 A"/>
    <property type="chains" value="I/J/K/L=591-601"/>
</dbReference>
<dbReference type="PDB" id="6I5N">
    <property type="method" value="X-ray"/>
    <property type="resolution" value="1.98 A"/>
    <property type="chains" value="I/J/K/L=591-601"/>
</dbReference>
<dbReference type="PDBsum" id="1A22"/>
<dbReference type="PDBsum" id="1AXI"/>
<dbReference type="PDBsum" id="1HWG"/>
<dbReference type="PDBsum" id="1HWH"/>
<dbReference type="PDBsum" id="1KF9"/>
<dbReference type="PDBsum" id="2AEW"/>
<dbReference type="PDBsum" id="3HHR"/>
<dbReference type="PDBsum" id="5OEK"/>
<dbReference type="PDBsum" id="5OHD"/>
<dbReference type="PDBsum" id="6I5J"/>
<dbReference type="PDBsum" id="6I5N"/>
<dbReference type="SMR" id="P10912"/>
<dbReference type="BioGRID" id="108957">
    <property type="interactions" value="44"/>
</dbReference>
<dbReference type="CORUM" id="P10912"/>
<dbReference type="DIP" id="DIP-630N"/>
<dbReference type="ELM" id="P10912"/>
<dbReference type="FunCoup" id="P10912">
    <property type="interactions" value="1041"/>
</dbReference>
<dbReference type="IntAct" id="P10912">
    <property type="interactions" value="22"/>
</dbReference>
<dbReference type="STRING" id="9606.ENSP00000483403"/>
<dbReference type="ChEMBL" id="CHEMBL1976"/>
<dbReference type="DrugBank" id="DB16220">
    <property type="generic name" value="Lonapegsomatropin"/>
</dbReference>
<dbReference type="DrugBank" id="DB00082">
    <property type="generic name" value="Pegvisomant"/>
</dbReference>
<dbReference type="DrugBank" id="DB15093">
    <property type="generic name" value="Somapacitan"/>
</dbReference>
<dbReference type="DrugBank" id="DB00052">
    <property type="generic name" value="Somatotropin"/>
</dbReference>
<dbReference type="DrugBank" id="DB09098">
    <property type="generic name" value="Somatrem"/>
</dbReference>
<dbReference type="DrugBank" id="DB14960">
    <property type="generic name" value="Somatrogon"/>
</dbReference>
<dbReference type="DrugCentral" id="P10912"/>
<dbReference type="GuidetoPHARMACOLOGY" id="1720"/>
<dbReference type="GlyCosmos" id="P10912">
    <property type="glycosylation" value="6 sites, 1 glycan"/>
</dbReference>
<dbReference type="GlyGen" id="P10912">
    <property type="glycosylation" value="8 sites, 2 O-linked glycans (2 sites)"/>
</dbReference>
<dbReference type="iPTMnet" id="P10912"/>
<dbReference type="PhosphoSitePlus" id="P10912"/>
<dbReference type="BioMuta" id="GHR"/>
<dbReference type="DMDM" id="121180"/>
<dbReference type="MassIVE" id="P10912"/>
<dbReference type="PaxDb" id="9606-ENSP00000483403"/>
<dbReference type="PeptideAtlas" id="P10912"/>
<dbReference type="ProteomicsDB" id="52672">
    <molecule id="P10912-1"/>
</dbReference>
<dbReference type="ProteomicsDB" id="52673">
    <molecule id="P10912-2"/>
</dbReference>
<dbReference type="ProteomicsDB" id="52674">
    <molecule id="P10912-3"/>
</dbReference>
<dbReference type="ProteomicsDB" id="52675">
    <molecule id="P10912-4"/>
</dbReference>
<dbReference type="Antibodypedia" id="23220">
    <property type="antibodies" value="401 antibodies from 36 providers"/>
</dbReference>
<dbReference type="DNASU" id="2690"/>
<dbReference type="Ensembl" id="ENST00000230882.9">
    <molecule id="P10912-1"/>
    <property type="protein sequence ID" value="ENSP00000230882.4"/>
    <property type="gene ID" value="ENSG00000112964.14"/>
</dbReference>
<dbReference type="Ensembl" id="ENST00000357703.6">
    <molecule id="P10912-4"/>
    <property type="protein sequence ID" value="ENSP00000350335.3"/>
    <property type="gene ID" value="ENSG00000112964.14"/>
</dbReference>
<dbReference type="Ensembl" id="ENST00000537449.5">
    <molecule id="P10912-1"/>
    <property type="protein sequence ID" value="ENSP00000442206.2"/>
    <property type="gene ID" value="ENSG00000112964.14"/>
</dbReference>
<dbReference type="Ensembl" id="ENST00000612382.4">
    <molecule id="P10912-1"/>
    <property type="protein sequence ID" value="ENSP00000478332.1"/>
    <property type="gene ID" value="ENSG00000112964.14"/>
</dbReference>
<dbReference type="Ensembl" id="ENST00000612626.4">
    <molecule id="P10912-1"/>
    <property type="protein sequence ID" value="ENSP00000479846.1"/>
    <property type="gene ID" value="ENSG00000112964.14"/>
</dbReference>
<dbReference type="Ensembl" id="ENST00000615111.4">
    <molecule id="P10912-1"/>
    <property type="protein sequence ID" value="ENSP00000478291.1"/>
    <property type="gene ID" value="ENSG00000112964.14"/>
</dbReference>
<dbReference type="Ensembl" id="ENST00000618088.4">
    <molecule id="P10912-1"/>
    <property type="protein sequence ID" value="ENSP00000482373.1"/>
    <property type="gene ID" value="ENSG00000112964.14"/>
</dbReference>
<dbReference type="GeneID" id="2690"/>
<dbReference type="KEGG" id="hsa:2690"/>
<dbReference type="MANE-Select" id="ENST00000230882.9">
    <property type="protein sequence ID" value="ENSP00000230882.4"/>
    <property type="RefSeq nucleotide sequence ID" value="NM_000163.5"/>
    <property type="RefSeq protein sequence ID" value="NP_000154.1"/>
</dbReference>
<dbReference type="UCSC" id="uc003jmt.4">
    <molecule id="P10912-1"/>
    <property type="organism name" value="human"/>
</dbReference>
<dbReference type="AGR" id="HGNC:4263"/>
<dbReference type="CTD" id="2690"/>
<dbReference type="DisGeNET" id="2690"/>
<dbReference type="GeneCards" id="GHR"/>
<dbReference type="HGNC" id="HGNC:4263">
    <property type="gene designation" value="GHR"/>
</dbReference>
<dbReference type="HPA" id="ENSG00000112964">
    <property type="expression patterns" value="Tissue enhanced (adipose tissue, liver)"/>
</dbReference>
<dbReference type="MalaCards" id="GHR"/>
<dbReference type="MIM" id="143890">
    <property type="type" value="phenotype"/>
</dbReference>
<dbReference type="MIM" id="262500">
    <property type="type" value="phenotype"/>
</dbReference>
<dbReference type="MIM" id="600946">
    <property type="type" value="gene"/>
</dbReference>
<dbReference type="MIM" id="604271">
    <property type="type" value="phenotype"/>
</dbReference>
<dbReference type="neXtProt" id="NX_P10912"/>
<dbReference type="OpenTargets" id="ENSG00000112964"/>
<dbReference type="Orphanet" id="633">
    <property type="disease" value="Laron syndrome"/>
</dbReference>
<dbReference type="Orphanet" id="314802">
    <property type="disease" value="Short stature due to partial GHR deficiency"/>
</dbReference>
<dbReference type="PharmGKB" id="PA28674"/>
<dbReference type="VEuPathDB" id="HostDB:ENSG00000112964"/>
<dbReference type="eggNOG" id="KOG3555">
    <property type="taxonomic scope" value="Eukaryota"/>
</dbReference>
<dbReference type="GeneTree" id="ENSGT00940000159987"/>
<dbReference type="HOGENOM" id="CLU_022322_0_0_1"/>
<dbReference type="InParanoid" id="P10912"/>
<dbReference type="OMA" id="YKPQLYN"/>
<dbReference type="OrthoDB" id="9890215at2759"/>
<dbReference type="PAN-GO" id="P10912">
    <property type="GO annotations" value="11 GO annotations based on evolutionary models"/>
</dbReference>
<dbReference type="PhylomeDB" id="P10912"/>
<dbReference type="TreeFam" id="TF330851"/>
<dbReference type="PathwayCommons" id="P10912"/>
<dbReference type="Reactome" id="R-HSA-1170546">
    <property type="pathway name" value="Prolactin receptor signaling"/>
</dbReference>
<dbReference type="Reactome" id="R-HSA-982772">
    <property type="pathway name" value="Growth hormone receptor signaling"/>
</dbReference>
<dbReference type="SignaLink" id="P10912"/>
<dbReference type="SIGNOR" id="P10912"/>
<dbReference type="BioGRID-ORCS" id="2690">
    <property type="hits" value="10 hits in 1159 CRISPR screens"/>
</dbReference>
<dbReference type="ChiTaRS" id="GHR">
    <property type="organism name" value="human"/>
</dbReference>
<dbReference type="EvolutionaryTrace" id="P10912"/>
<dbReference type="GeneWiki" id="Growth_hormone_receptor"/>
<dbReference type="GenomeRNAi" id="2690"/>
<dbReference type="Pharos" id="P10912">
    <property type="development level" value="Tclin"/>
</dbReference>
<dbReference type="PRO" id="PR:P10912"/>
<dbReference type="Proteomes" id="UP000005640">
    <property type="component" value="Chromosome 5"/>
</dbReference>
<dbReference type="RNAct" id="P10912">
    <property type="molecule type" value="protein"/>
</dbReference>
<dbReference type="Bgee" id="ENSG00000112964">
    <property type="expression patterns" value="Expressed in skeletal muscle tissue of rectus abdominis and 167 other cell types or tissues"/>
</dbReference>
<dbReference type="ExpressionAtlas" id="P10912">
    <property type="expression patterns" value="baseline and differential"/>
</dbReference>
<dbReference type="GO" id="GO:0009986">
    <property type="term" value="C:cell surface"/>
    <property type="evidence" value="ECO:0000314"/>
    <property type="project" value="BHF-UCL"/>
</dbReference>
<dbReference type="GO" id="GO:0036464">
    <property type="term" value="C:cytoplasmic ribonucleoprotein granule"/>
    <property type="evidence" value="ECO:0000314"/>
    <property type="project" value="HPA"/>
</dbReference>
<dbReference type="GO" id="GO:0005829">
    <property type="term" value="C:cytosol"/>
    <property type="evidence" value="ECO:0000314"/>
    <property type="project" value="HPA"/>
</dbReference>
<dbReference type="GO" id="GO:0009897">
    <property type="term" value="C:external side of plasma membrane"/>
    <property type="evidence" value="ECO:0000318"/>
    <property type="project" value="GO_Central"/>
</dbReference>
<dbReference type="GO" id="GO:0005576">
    <property type="term" value="C:extracellular region"/>
    <property type="evidence" value="ECO:0000304"/>
    <property type="project" value="Reactome"/>
</dbReference>
<dbReference type="GO" id="GO:0005615">
    <property type="term" value="C:extracellular space"/>
    <property type="evidence" value="ECO:0000314"/>
    <property type="project" value="BHF-UCL"/>
</dbReference>
<dbReference type="GO" id="GO:0070195">
    <property type="term" value="C:growth hormone receptor complex"/>
    <property type="evidence" value="ECO:0000314"/>
    <property type="project" value="CAFA"/>
</dbReference>
<dbReference type="GO" id="GO:0016020">
    <property type="term" value="C:membrane"/>
    <property type="evidence" value="ECO:0000314"/>
    <property type="project" value="BHF-UCL"/>
</dbReference>
<dbReference type="GO" id="GO:0043025">
    <property type="term" value="C:neuronal cell body"/>
    <property type="evidence" value="ECO:0007669"/>
    <property type="project" value="Ensembl"/>
</dbReference>
<dbReference type="GO" id="GO:0005886">
    <property type="term" value="C:plasma membrane"/>
    <property type="evidence" value="ECO:0000314"/>
    <property type="project" value="BHF-UCL"/>
</dbReference>
<dbReference type="GO" id="GO:0043235">
    <property type="term" value="C:receptor complex"/>
    <property type="evidence" value="ECO:0000314"/>
    <property type="project" value="BHF-UCL"/>
</dbReference>
<dbReference type="GO" id="GO:0019955">
    <property type="term" value="F:cytokine binding"/>
    <property type="evidence" value="ECO:0000318"/>
    <property type="project" value="GO_Central"/>
</dbReference>
<dbReference type="GO" id="GO:0019838">
    <property type="term" value="F:growth factor binding"/>
    <property type="evidence" value="ECO:0000353"/>
    <property type="project" value="BHF-UCL"/>
</dbReference>
<dbReference type="GO" id="GO:0004903">
    <property type="term" value="F:growth hormone receptor activity"/>
    <property type="evidence" value="ECO:0000314"/>
    <property type="project" value="UniProtKB"/>
</dbReference>
<dbReference type="GO" id="GO:0042802">
    <property type="term" value="F:identical protein binding"/>
    <property type="evidence" value="ECO:0000353"/>
    <property type="project" value="IntAct"/>
</dbReference>
<dbReference type="GO" id="GO:0008289">
    <property type="term" value="F:lipid binding"/>
    <property type="evidence" value="ECO:0000269"/>
    <property type="project" value="DisProt"/>
</dbReference>
<dbReference type="GO" id="GO:0017046">
    <property type="term" value="F:peptide hormone binding"/>
    <property type="evidence" value="ECO:0000353"/>
    <property type="project" value="BHF-UCL"/>
</dbReference>
<dbReference type="GO" id="GO:0070064">
    <property type="term" value="F:proline-rich region binding"/>
    <property type="evidence" value="ECO:0000250"/>
    <property type="project" value="BHF-UCL"/>
</dbReference>
<dbReference type="GO" id="GO:0042803">
    <property type="term" value="F:protein homodimerization activity"/>
    <property type="evidence" value="ECO:0000314"/>
    <property type="project" value="BHF-UCL"/>
</dbReference>
<dbReference type="GO" id="GO:0019901">
    <property type="term" value="F:protein kinase binding"/>
    <property type="evidence" value="ECO:0000250"/>
    <property type="project" value="BHF-UCL"/>
</dbReference>
<dbReference type="GO" id="GO:0019903">
    <property type="term" value="F:protein phosphatase binding"/>
    <property type="evidence" value="ECO:0007669"/>
    <property type="project" value="Ensembl"/>
</dbReference>
<dbReference type="GO" id="GO:0042169">
    <property type="term" value="F:SH2 domain binding"/>
    <property type="evidence" value="ECO:0007669"/>
    <property type="project" value="Ensembl"/>
</dbReference>
<dbReference type="GO" id="GO:0060351">
    <property type="term" value="P:cartilage development involved in endochondral bone morphogenesis"/>
    <property type="evidence" value="ECO:0007669"/>
    <property type="project" value="Ensembl"/>
</dbReference>
<dbReference type="GO" id="GO:0007259">
    <property type="term" value="P:cell surface receptor signaling pathway via JAK-STAT"/>
    <property type="evidence" value="ECO:0000250"/>
    <property type="project" value="BHF-UCL"/>
</dbReference>
<dbReference type="GO" id="GO:0032870">
    <property type="term" value="P:cellular response to hormone stimulus"/>
    <property type="evidence" value="ECO:0000315"/>
    <property type="project" value="BHF-UCL"/>
</dbReference>
<dbReference type="GO" id="GO:0032869">
    <property type="term" value="P:cellular response to insulin stimulus"/>
    <property type="evidence" value="ECO:0007669"/>
    <property type="project" value="Ensembl"/>
</dbReference>
<dbReference type="GO" id="GO:0019221">
    <property type="term" value="P:cytokine-mediated signaling pathway"/>
    <property type="evidence" value="ECO:0000318"/>
    <property type="project" value="GO_Central"/>
</dbReference>
<dbReference type="GO" id="GO:0006897">
    <property type="term" value="P:endocytosis"/>
    <property type="evidence" value="ECO:0007669"/>
    <property type="project" value="UniProtKB-KW"/>
</dbReference>
<dbReference type="GO" id="GO:0060396">
    <property type="term" value="P:growth hormone receptor signaling pathway"/>
    <property type="evidence" value="ECO:0000314"/>
    <property type="project" value="UniProtKB"/>
</dbReference>
<dbReference type="GO" id="GO:0042445">
    <property type="term" value="P:hormone metabolic process"/>
    <property type="evidence" value="ECO:0000315"/>
    <property type="project" value="BHF-UCL"/>
</dbReference>
<dbReference type="GO" id="GO:0009755">
    <property type="term" value="P:hormone-mediated signaling pathway"/>
    <property type="evidence" value="ECO:0007669"/>
    <property type="project" value="Ensembl"/>
</dbReference>
<dbReference type="GO" id="GO:0048009">
    <property type="term" value="P:insulin-like growth factor receptor signaling pathway"/>
    <property type="evidence" value="ECO:0000315"/>
    <property type="project" value="BHF-UCL"/>
</dbReference>
<dbReference type="GO" id="GO:0045597">
    <property type="term" value="P:positive regulation of cell differentiation"/>
    <property type="evidence" value="ECO:0007669"/>
    <property type="project" value="Ensembl"/>
</dbReference>
<dbReference type="GO" id="GO:0008284">
    <property type="term" value="P:positive regulation of cell population proliferation"/>
    <property type="evidence" value="ECO:0000318"/>
    <property type="project" value="GO_Central"/>
</dbReference>
<dbReference type="GO" id="GO:0043406">
    <property type="term" value="P:positive regulation of MAP kinase activity"/>
    <property type="evidence" value="ECO:0000250"/>
    <property type="project" value="BHF-UCL"/>
</dbReference>
<dbReference type="GO" id="GO:0040018">
    <property type="term" value="P:positive regulation of multicellular organism growth"/>
    <property type="evidence" value="ECO:0000315"/>
    <property type="project" value="BHF-UCL"/>
</dbReference>
<dbReference type="GO" id="GO:0046427">
    <property type="term" value="P:positive regulation of receptor signaling pathway via JAK-STAT"/>
    <property type="evidence" value="ECO:0000318"/>
    <property type="project" value="GO_Central"/>
</dbReference>
<dbReference type="GO" id="GO:0031623">
    <property type="term" value="P:receptor internalization"/>
    <property type="evidence" value="ECO:0000314"/>
    <property type="project" value="BHF-UCL"/>
</dbReference>
<dbReference type="GO" id="GO:0040014">
    <property type="term" value="P:regulation of multicellular organism growth"/>
    <property type="evidence" value="ECO:0000250"/>
    <property type="project" value="BHF-UCL"/>
</dbReference>
<dbReference type="GO" id="GO:0032107">
    <property type="term" value="P:regulation of response to nutrient levels"/>
    <property type="evidence" value="ECO:0007669"/>
    <property type="project" value="Ensembl"/>
</dbReference>
<dbReference type="GO" id="GO:0046898">
    <property type="term" value="P:response to cycloheximide"/>
    <property type="evidence" value="ECO:0000314"/>
    <property type="project" value="BHF-UCL"/>
</dbReference>
<dbReference type="GO" id="GO:0032355">
    <property type="term" value="P:response to estradiol"/>
    <property type="evidence" value="ECO:0000314"/>
    <property type="project" value="BHF-UCL"/>
</dbReference>
<dbReference type="GO" id="GO:0032094">
    <property type="term" value="P:response to food"/>
    <property type="evidence" value="ECO:0007669"/>
    <property type="project" value="Ensembl"/>
</dbReference>
<dbReference type="GO" id="GO:0051384">
    <property type="term" value="P:response to glucocorticoid"/>
    <property type="evidence" value="ECO:0007669"/>
    <property type="project" value="Ensembl"/>
</dbReference>
<dbReference type="GO" id="GO:0009629">
    <property type="term" value="P:response to gravity"/>
    <property type="evidence" value="ECO:0007669"/>
    <property type="project" value="Ensembl"/>
</dbReference>
<dbReference type="GO" id="GO:0070555">
    <property type="term" value="P:response to interleukin-1"/>
    <property type="evidence" value="ECO:0007669"/>
    <property type="project" value="Ensembl"/>
</dbReference>
<dbReference type="GO" id="GO:0019530">
    <property type="term" value="P:taurine metabolic process"/>
    <property type="evidence" value="ECO:0000250"/>
    <property type="project" value="BHF-UCL"/>
</dbReference>
<dbReference type="CDD" id="cd00063">
    <property type="entry name" value="FN3"/>
    <property type="match status" value="1"/>
</dbReference>
<dbReference type="DisProt" id="DP00033"/>
<dbReference type="FunFam" id="2.60.40.10:FF:000269">
    <property type="entry name" value="Growth hormone receptor"/>
    <property type="match status" value="1"/>
</dbReference>
<dbReference type="FunFam" id="2.60.40.10:FF:000318">
    <property type="entry name" value="Growth hormone receptor"/>
    <property type="match status" value="1"/>
</dbReference>
<dbReference type="Gene3D" id="2.60.40.10">
    <property type="entry name" value="Immunoglobulins"/>
    <property type="match status" value="2"/>
</dbReference>
<dbReference type="InterPro" id="IPR003961">
    <property type="entry name" value="FN3_dom"/>
</dbReference>
<dbReference type="InterPro" id="IPR036116">
    <property type="entry name" value="FN3_sf"/>
</dbReference>
<dbReference type="InterPro" id="IPR025871">
    <property type="entry name" value="GHBP"/>
</dbReference>
<dbReference type="InterPro" id="IPR015152">
    <property type="entry name" value="Growth/epo_recpt_lig-bind"/>
</dbReference>
<dbReference type="InterPro" id="IPR013783">
    <property type="entry name" value="Ig-like_fold"/>
</dbReference>
<dbReference type="InterPro" id="IPR003528">
    <property type="entry name" value="Long_hematopoietin_rcpt_CS"/>
</dbReference>
<dbReference type="PANTHER" id="PTHR23037">
    <property type="entry name" value="CYTOKINE RECEPTOR"/>
    <property type="match status" value="1"/>
</dbReference>
<dbReference type="PANTHER" id="PTHR23037:SF46">
    <property type="entry name" value="INTERLEUKIN 5 RECEPTOR SUBUNIT ALPHA"/>
    <property type="match status" value="1"/>
</dbReference>
<dbReference type="Pfam" id="PF09067">
    <property type="entry name" value="EpoR_lig-bind"/>
    <property type="match status" value="1"/>
</dbReference>
<dbReference type="Pfam" id="PF00041">
    <property type="entry name" value="fn3"/>
    <property type="match status" value="1"/>
</dbReference>
<dbReference type="Pfam" id="PF12772">
    <property type="entry name" value="GHBP"/>
    <property type="match status" value="1"/>
</dbReference>
<dbReference type="SUPFAM" id="SSF49265">
    <property type="entry name" value="Fibronectin type III"/>
    <property type="match status" value="2"/>
</dbReference>
<dbReference type="PROSITE" id="PS50853">
    <property type="entry name" value="FN3"/>
    <property type="match status" value="1"/>
</dbReference>
<dbReference type="PROSITE" id="PS01352">
    <property type="entry name" value="HEMATOPO_REC_L_F1"/>
    <property type="match status" value="1"/>
</dbReference>
<protein>
    <recommendedName>
        <fullName evidence="37">Growth hormone receptor</fullName>
        <shortName>GH receptor</shortName>
    </recommendedName>
    <alternativeName>
        <fullName>Somatotropin receptor</fullName>
    </alternativeName>
    <component>
        <recommendedName>
            <fullName evidence="37">Growth hormone-binding protein</fullName>
            <shortName>GH-binding protein</shortName>
            <shortName>GHBP</shortName>
        </recommendedName>
        <alternativeName>
            <fullName>Serum-binding protein</fullName>
        </alternativeName>
    </component>
</protein>